<sequence>MSLTKAERTMVVSIWGKISMQADAVGTEALQRLFSSYPQTKTYFPHFDLHEGSPQLRAHGSKVAAAVGDAVKSIDNVAGALAKLSELHAYILRVDPVNFKFLSHCLLVTLASRLPADFTADAHAAWDKFLSIVSSVLTEKYR</sequence>
<dbReference type="EMBL" id="X07051">
    <property type="protein sequence ID" value="CAA30095.1"/>
    <property type="molecule type" value="Genomic_DNA"/>
</dbReference>
<dbReference type="EMBL" id="X07052">
    <property type="protein sequence ID" value="CAA30096.1"/>
    <property type="molecule type" value="Genomic_DNA"/>
</dbReference>
<dbReference type="PIR" id="S01714">
    <property type="entry name" value="S01714"/>
</dbReference>
<dbReference type="RefSeq" id="NP_001108014.1">
    <property type="nucleotide sequence ID" value="NM_001114542.1"/>
</dbReference>
<dbReference type="SMR" id="P13787"/>
<dbReference type="FunCoup" id="P13787">
    <property type="interactions" value="50"/>
</dbReference>
<dbReference type="STRING" id="9796.ENSECAP00000014183"/>
<dbReference type="PaxDb" id="9796-ENSECAP00000014183"/>
<dbReference type="PeptideAtlas" id="P13787"/>
<dbReference type="Ensembl" id="ENSECAT00000017453.4">
    <property type="protein sequence ID" value="ENSECAP00000014183.2"/>
    <property type="gene ID" value="ENSECAG00000016460.4"/>
</dbReference>
<dbReference type="GeneID" id="100065056"/>
<dbReference type="KEGG" id="ecb:100065056"/>
<dbReference type="CTD" id="3050"/>
<dbReference type="VGNC" id="VGNC:52395">
    <property type="gene designation" value="HBZ"/>
</dbReference>
<dbReference type="GeneTree" id="ENSGT00940000158623"/>
<dbReference type="InParanoid" id="P13787"/>
<dbReference type="OMA" id="VIATMFP"/>
<dbReference type="OrthoDB" id="8751793at2759"/>
<dbReference type="Proteomes" id="UP000002281">
    <property type="component" value="Chromosome 13"/>
</dbReference>
<dbReference type="Bgee" id="ENSECAG00000016460">
    <property type="expression patterns" value="Expressed in trophoblast and 3 other cell types or tissues"/>
</dbReference>
<dbReference type="GO" id="GO:0031838">
    <property type="term" value="C:haptoglobin-hemoglobin complex"/>
    <property type="evidence" value="ECO:0000318"/>
    <property type="project" value="GO_Central"/>
</dbReference>
<dbReference type="GO" id="GO:0005833">
    <property type="term" value="C:hemoglobin complex"/>
    <property type="evidence" value="ECO:0000318"/>
    <property type="project" value="GO_Central"/>
</dbReference>
<dbReference type="GO" id="GO:0020037">
    <property type="term" value="F:heme binding"/>
    <property type="evidence" value="ECO:0000318"/>
    <property type="project" value="GO_Central"/>
</dbReference>
<dbReference type="GO" id="GO:0005506">
    <property type="term" value="F:iron ion binding"/>
    <property type="evidence" value="ECO:0007669"/>
    <property type="project" value="InterPro"/>
</dbReference>
<dbReference type="GO" id="GO:0019825">
    <property type="term" value="F:oxygen binding"/>
    <property type="evidence" value="ECO:0000318"/>
    <property type="project" value="GO_Central"/>
</dbReference>
<dbReference type="GO" id="GO:0005344">
    <property type="term" value="F:oxygen carrier activity"/>
    <property type="evidence" value="ECO:0000318"/>
    <property type="project" value="GO_Central"/>
</dbReference>
<dbReference type="GO" id="GO:0098869">
    <property type="term" value="P:cellular oxidant detoxification"/>
    <property type="evidence" value="ECO:0007669"/>
    <property type="project" value="GOC"/>
</dbReference>
<dbReference type="GO" id="GO:0043249">
    <property type="term" value="P:erythrocyte maturation"/>
    <property type="evidence" value="ECO:0007669"/>
    <property type="project" value="Ensembl"/>
</dbReference>
<dbReference type="GO" id="GO:0042744">
    <property type="term" value="P:hydrogen peroxide catabolic process"/>
    <property type="evidence" value="ECO:0000318"/>
    <property type="project" value="GO_Central"/>
</dbReference>
<dbReference type="GO" id="GO:0000122">
    <property type="term" value="P:negative regulation of transcription by RNA polymerase II"/>
    <property type="evidence" value="ECO:0007669"/>
    <property type="project" value="Ensembl"/>
</dbReference>
<dbReference type="CDD" id="cd08927">
    <property type="entry name" value="Hb-alpha-like"/>
    <property type="match status" value="1"/>
</dbReference>
<dbReference type="FunFam" id="1.10.490.10:FF:000002">
    <property type="entry name" value="Hemoglobin subunit alpha"/>
    <property type="match status" value="1"/>
</dbReference>
<dbReference type="Gene3D" id="1.10.490.10">
    <property type="entry name" value="Globins"/>
    <property type="match status" value="1"/>
</dbReference>
<dbReference type="InterPro" id="IPR000971">
    <property type="entry name" value="Globin"/>
</dbReference>
<dbReference type="InterPro" id="IPR009050">
    <property type="entry name" value="Globin-like_sf"/>
</dbReference>
<dbReference type="InterPro" id="IPR012292">
    <property type="entry name" value="Globin/Proto"/>
</dbReference>
<dbReference type="InterPro" id="IPR002338">
    <property type="entry name" value="Hemoglobin_a-typ"/>
</dbReference>
<dbReference type="InterPro" id="IPR050056">
    <property type="entry name" value="Hemoglobin_oxygen_transport"/>
</dbReference>
<dbReference type="InterPro" id="IPR002340">
    <property type="entry name" value="Hemoglobin_zeta"/>
</dbReference>
<dbReference type="PANTHER" id="PTHR11442">
    <property type="entry name" value="HEMOGLOBIN FAMILY MEMBER"/>
    <property type="match status" value="1"/>
</dbReference>
<dbReference type="PANTHER" id="PTHR11442:SF41">
    <property type="entry name" value="HEMOGLOBIN SUBUNIT ZETA"/>
    <property type="match status" value="1"/>
</dbReference>
<dbReference type="Pfam" id="PF00042">
    <property type="entry name" value="Globin"/>
    <property type="match status" value="1"/>
</dbReference>
<dbReference type="PRINTS" id="PR00612">
    <property type="entry name" value="ALPHAHAEM"/>
</dbReference>
<dbReference type="PRINTS" id="PR00816">
    <property type="entry name" value="ZETAHAEM"/>
</dbReference>
<dbReference type="SUPFAM" id="SSF46458">
    <property type="entry name" value="Globin-like"/>
    <property type="match status" value="1"/>
</dbReference>
<dbReference type="PROSITE" id="PS01033">
    <property type="entry name" value="GLOBIN"/>
    <property type="match status" value="1"/>
</dbReference>
<reference key="1">
    <citation type="journal article" date="1988" name="J. Mol. Biol.">
        <title>Structure and evolution of the horse zeta globin locus.</title>
        <authorList>
            <person name="Flint J."/>
            <person name="Taylor A.M."/>
            <person name="Clegg J.B."/>
        </authorList>
    </citation>
    <scope>NUCLEOTIDE SEQUENCE [GENOMIC DNA]</scope>
</reference>
<gene>
    <name type="primary">HBZ1</name>
</gene>
<proteinExistence type="inferred from homology"/>
<evidence type="ECO:0000250" key="1"/>
<evidence type="ECO:0000250" key="2">
    <source>
        <dbReference type="UniProtKB" id="P02008"/>
    </source>
</evidence>
<evidence type="ECO:0000255" key="3">
    <source>
        <dbReference type="PROSITE-ProRule" id="PRU00238"/>
    </source>
</evidence>
<feature type="initiator methionine" description="Removed" evidence="2">
    <location>
        <position position="1"/>
    </location>
</feature>
<feature type="chain" id="PRO_0000052850" description="Hemoglobin subunit zeta">
    <location>
        <begin position="2"/>
        <end position="142"/>
    </location>
</feature>
<feature type="domain" description="Globin" evidence="3">
    <location>
        <begin position="2"/>
        <end position="142"/>
    </location>
</feature>
<feature type="binding site" description="distal binding residue">
    <location>
        <position position="59"/>
    </location>
    <ligand>
        <name>heme b</name>
        <dbReference type="ChEBI" id="CHEBI:60344"/>
    </ligand>
    <ligandPart>
        <name>Fe</name>
        <dbReference type="ChEBI" id="CHEBI:18248"/>
    </ligandPart>
</feature>
<feature type="binding site" description="proximal binding residue">
    <location>
        <position position="88"/>
    </location>
    <ligand>
        <name>heme b</name>
        <dbReference type="ChEBI" id="CHEBI:60344"/>
    </ligand>
    <ligandPart>
        <name>Fe</name>
        <dbReference type="ChEBI" id="CHEBI:18248"/>
    </ligandPart>
</feature>
<feature type="modified residue" description="N-acetylserine" evidence="2">
    <location>
        <position position="2"/>
    </location>
</feature>
<feature type="modified residue" description="Phosphoserine" evidence="2">
    <location>
        <position position="53"/>
    </location>
</feature>
<feature type="modified residue" description="Phosphoserine" evidence="2">
    <location>
        <position position="73"/>
    </location>
</feature>
<protein>
    <recommendedName>
        <fullName>Hemoglobin subunit zeta</fullName>
    </recommendedName>
    <alternativeName>
        <fullName>Hemoglobin zeta chain</fullName>
    </alternativeName>
    <alternativeName>
        <fullName>Zeta-globin</fullName>
    </alternativeName>
</protein>
<comment type="function">
    <text evidence="1">The zeta chain is an alpha-type chain of mammalian embryonic hemoglobin.</text>
</comment>
<comment type="subunit">
    <text evidence="1">Heterotetramer of two zeta chains and beta-type chains.</text>
</comment>
<comment type="similarity">
    <text evidence="3">Belongs to the globin family.</text>
</comment>
<organism>
    <name type="scientific">Equus caballus</name>
    <name type="common">Horse</name>
    <dbReference type="NCBI Taxonomy" id="9796"/>
    <lineage>
        <taxon>Eukaryota</taxon>
        <taxon>Metazoa</taxon>
        <taxon>Chordata</taxon>
        <taxon>Craniata</taxon>
        <taxon>Vertebrata</taxon>
        <taxon>Euteleostomi</taxon>
        <taxon>Mammalia</taxon>
        <taxon>Eutheria</taxon>
        <taxon>Laurasiatheria</taxon>
        <taxon>Perissodactyla</taxon>
        <taxon>Equidae</taxon>
        <taxon>Equus</taxon>
    </lineage>
</organism>
<name>HBAZ_HORSE</name>
<keyword id="KW-0007">Acetylation</keyword>
<keyword id="KW-0349">Heme</keyword>
<keyword id="KW-0408">Iron</keyword>
<keyword id="KW-0479">Metal-binding</keyword>
<keyword id="KW-0561">Oxygen transport</keyword>
<keyword id="KW-0597">Phosphoprotein</keyword>
<keyword id="KW-1185">Reference proteome</keyword>
<keyword id="KW-0813">Transport</keyword>
<accession>P13787</accession>